<accession>C3LMQ4</accession>
<keyword id="KW-0378">Hydrolase</keyword>
<proteinExistence type="inferred from homology"/>
<name>AC4CH_VIBCM</name>
<comment type="function">
    <text evidence="2">Catalyzes the hydrolysis of N(4)-acetylcytidine (ac4C).</text>
</comment>
<comment type="catalytic activity">
    <reaction evidence="2">
        <text>N(4)-acetylcytidine + H2O = cytidine + acetate + H(+)</text>
        <dbReference type="Rhea" id="RHEA:62932"/>
        <dbReference type="ChEBI" id="CHEBI:15377"/>
        <dbReference type="ChEBI" id="CHEBI:15378"/>
        <dbReference type="ChEBI" id="CHEBI:17562"/>
        <dbReference type="ChEBI" id="CHEBI:30089"/>
        <dbReference type="ChEBI" id="CHEBI:70989"/>
        <dbReference type="EC" id="3.5.1.135"/>
    </reaction>
</comment>
<comment type="catalytic activity">
    <reaction evidence="2">
        <text>N(4)-acetyl-2'-deoxycytidine + H2O = 2'-deoxycytidine + acetate + H(+)</text>
        <dbReference type="Rhea" id="RHEA:62936"/>
        <dbReference type="ChEBI" id="CHEBI:15377"/>
        <dbReference type="ChEBI" id="CHEBI:15378"/>
        <dbReference type="ChEBI" id="CHEBI:15698"/>
        <dbReference type="ChEBI" id="CHEBI:30089"/>
        <dbReference type="ChEBI" id="CHEBI:146133"/>
        <dbReference type="EC" id="3.5.1.135"/>
    </reaction>
</comment>
<comment type="catalytic activity">
    <reaction evidence="2">
        <text>N(4)-acetylcytosine + H2O = cytosine + acetate + H(+)</text>
        <dbReference type="Rhea" id="RHEA:62940"/>
        <dbReference type="ChEBI" id="CHEBI:15377"/>
        <dbReference type="ChEBI" id="CHEBI:15378"/>
        <dbReference type="ChEBI" id="CHEBI:16040"/>
        <dbReference type="ChEBI" id="CHEBI:30089"/>
        <dbReference type="ChEBI" id="CHEBI:146134"/>
        <dbReference type="EC" id="3.5.1.135"/>
    </reaction>
</comment>
<comment type="similarity">
    <text evidence="2">Belongs to the N(4)-acetylcytidine amidohydrolase family.</text>
</comment>
<evidence type="ECO:0000255" key="1"/>
<evidence type="ECO:0000255" key="2">
    <source>
        <dbReference type="HAMAP-Rule" id="MF_00684"/>
    </source>
</evidence>
<sequence length="105" mass="12119">MSISTQITFFEFLTPLVASGQKTITIRDKSESHYVPGTRVEVFTLETQRKVCEIDILAVEPLKFDEINEFHAEQEAIELPKLKALIQEIYPNIDELYVITYQLAK</sequence>
<feature type="chain" id="PRO_1000147753" description="N(4)-acetylcytidine amidohydrolase">
    <location>
        <begin position="1"/>
        <end position="105"/>
    </location>
</feature>
<feature type="domain" description="ASCH" evidence="1">
    <location>
        <begin position="8"/>
        <end position="93"/>
    </location>
</feature>
<feature type="active site" description="Proton acceptor" evidence="2">
    <location>
        <position position="22"/>
    </location>
</feature>
<feature type="active site" description="Nucleophile" evidence="2">
    <location>
        <position position="25"/>
    </location>
</feature>
<feature type="active site" description="Proton donor" evidence="2">
    <location>
        <position position="75"/>
    </location>
</feature>
<organism>
    <name type="scientific">Vibrio cholerae serotype O1 (strain M66-2)</name>
    <dbReference type="NCBI Taxonomy" id="579112"/>
    <lineage>
        <taxon>Bacteria</taxon>
        <taxon>Pseudomonadati</taxon>
        <taxon>Pseudomonadota</taxon>
        <taxon>Gammaproteobacteria</taxon>
        <taxon>Vibrionales</taxon>
        <taxon>Vibrionaceae</taxon>
        <taxon>Vibrio</taxon>
    </lineage>
</organism>
<gene>
    <name type="ordered locus">VCM66_1516</name>
</gene>
<protein>
    <recommendedName>
        <fullName evidence="2">N(4)-acetylcytidine amidohydrolase</fullName>
        <shortName evidence="2">ac4C amidohydrolase</shortName>
        <ecNumber evidence="2">3.5.1.135</ecNumber>
    </recommendedName>
</protein>
<reference key="1">
    <citation type="journal article" date="2008" name="PLoS ONE">
        <title>A recalibrated molecular clock and independent origins for the cholera pandemic clones.</title>
        <authorList>
            <person name="Feng L."/>
            <person name="Reeves P.R."/>
            <person name="Lan R."/>
            <person name="Ren Y."/>
            <person name="Gao C."/>
            <person name="Zhou Z."/>
            <person name="Ren Y."/>
            <person name="Cheng J."/>
            <person name="Wang W."/>
            <person name="Wang J."/>
            <person name="Qian W."/>
            <person name="Li D."/>
            <person name="Wang L."/>
        </authorList>
    </citation>
    <scope>NUCLEOTIDE SEQUENCE [LARGE SCALE GENOMIC DNA]</scope>
    <source>
        <strain>M66-2</strain>
    </source>
</reference>
<dbReference type="EC" id="3.5.1.135" evidence="2"/>
<dbReference type="EMBL" id="CP001233">
    <property type="protein sequence ID" value="ACP05830.1"/>
    <property type="molecule type" value="Genomic_DNA"/>
</dbReference>
<dbReference type="SMR" id="C3LMQ4"/>
<dbReference type="KEGG" id="vcm:VCM66_1516"/>
<dbReference type="HOGENOM" id="CLU_152586_0_0_6"/>
<dbReference type="Proteomes" id="UP000001217">
    <property type="component" value="Chromosome I"/>
</dbReference>
<dbReference type="GO" id="GO:0005829">
    <property type="term" value="C:cytosol"/>
    <property type="evidence" value="ECO:0007669"/>
    <property type="project" value="TreeGrafter"/>
</dbReference>
<dbReference type="GO" id="GO:0016813">
    <property type="term" value="F:hydrolase activity, acting on carbon-nitrogen (but not peptide) bonds, in linear amidines"/>
    <property type="evidence" value="ECO:0007669"/>
    <property type="project" value="UniProtKB-UniRule"/>
</dbReference>
<dbReference type="GO" id="GO:0106251">
    <property type="term" value="F:N4-acetylcytidine amidohydrolase activity"/>
    <property type="evidence" value="ECO:0007669"/>
    <property type="project" value="RHEA"/>
</dbReference>
<dbReference type="CDD" id="cd06552">
    <property type="entry name" value="ASCH_yqfb_like"/>
    <property type="match status" value="1"/>
</dbReference>
<dbReference type="FunFam" id="2.30.130.30:FF:000005">
    <property type="entry name" value="UPF0267 protein VC_1576"/>
    <property type="match status" value="1"/>
</dbReference>
<dbReference type="Gene3D" id="2.30.130.30">
    <property type="entry name" value="Hypothetical protein"/>
    <property type="match status" value="1"/>
</dbReference>
<dbReference type="HAMAP" id="MF_00684">
    <property type="entry name" value="ac4C_amidohydr"/>
    <property type="match status" value="1"/>
</dbReference>
<dbReference type="InterPro" id="IPR008314">
    <property type="entry name" value="AC4CH"/>
</dbReference>
<dbReference type="InterPro" id="IPR007374">
    <property type="entry name" value="ASCH_domain"/>
</dbReference>
<dbReference type="InterPro" id="IPR015947">
    <property type="entry name" value="PUA-like_sf"/>
</dbReference>
<dbReference type="NCBIfam" id="NF003443">
    <property type="entry name" value="PRK04980.1"/>
    <property type="match status" value="1"/>
</dbReference>
<dbReference type="PANTHER" id="PTHR38088">
    <property type="entry name" value="UCP029143 FAMILY PROTEIN"/>
    <property type="match status" value="1"/>
</dbReference>
<dbReference type="PANTHER" id="PTHR38088:SF2">
    <property type="entry name" value="UCP029143 FAMILY PROTEIN"/>
    <property type="match status" value="1"/>
</dbReference>
<dbReference type="Pfam" id="PF04266">
    <property type="entry name" value="ASCH"/>
    <property type="match status" value="1"/>
</dbReference>
<dbReference type="PIRSF" id="PIRSF029143">
    <property type="entry name" value="UCP029143"/>
    <property type="match status" value="1"/>
</dbReference>
<dbReference type="SMART" id="SM01022">
    <property type="entry name" value="ASCH"/>
    <property type="match status" value="1"/>
</dbReference>
<dbReference type="SUPFAM" id="SSF88697">
    <property type="entry name" value="PUA domain-like"/>
    <property type="match status" value="1"/>
</dbReference>